<keyword id="KW-0328">Glycosyltransferase</keyword>
<keyword id="KW-0808">Transferase</keyword>
<feature type="chain" id="PRO_1000062733" description="UDP-N-acetyl-D-mannosaminuronic acid transferase">
    <location>
        <begin position="1"/>
        <end position="246"/>
    </location>
</feature>
<comment type="function">
    <text evidence="1">Catalyzes the synthesis of Und-PP-GlcNAc-ManNAcA (Lipid II), the second lipid-linked intermediate involved in enterobacterial common antigen (ECA) synthesis.</text>
</comment>
<comment type="catalytic activity">
    <reaction evidence="1">
        <text>UDP-N-acetyl-alpha-D-mannosaminouronate + N-acetyl-alpha-D-glucosaminyl-di-trans,octa-cis-undecaprenyl diphosphate = beta-D-ManNAcA-(1-&gt;4)-alpha-D-GlcNAc-di-trans,octa-cis-undecaprenyl diphosphate + UDP + H(+)</text>
        <dbReference type="Rhea" id="RHEA:28366"/>
        <dbReference type="ChEBI" id="CHEBI:15378"/>
        <dbReference type="ChEBI" id="CHEBI:58223"/>
        <dbReference type="ChEBI" id="CHEBI:61495"/>
        <dbReference type="ChEBI" id="CHEBI:62959"/>
        <dbReference type="ChEBI" id="CHEBI:70731"/>
        <dbReference type="EC" id="2.4.1.180"/>
    </reaction>
</comment>
<comment type="pathway">
    <text evidence="1">Bacterial outer membrane biogenesis; enterobacterial common antigen biosynthesis.</text>
</comment>
<comment type="similarity">
    <text evidence="1">Belongs to the glycosyltransferase 26 family.</text>
</comment>
<sequence>MNNNTTAPTYTLRGLQLIGWRDMQHALDYLFADGQLKQGTLVAINAEKMLTIEDNAEVRELINAAEFKYADGISVVRSVRKKYPQAQVSRVAGADLWEELMARAGKEGTPVFLVGGKPEVLAQTEAKLRNQWNVNIVGSQDGYFKPEQRQALFERIHASGAQIVTVAMGSPKQEIFMRDCRLVHPDALYMGVGGTYDVFTGHVKRAPKIWQTLGLEWLYRLLSQPSRIKRQLRLLRYLRWHYTGNL</sequence>
<accession>Q0SYY5</accession>
<proteinExistence type="inferred from homology"/>
<reference key="1">
    <citation type="journal article" date="2006" name="BMC Genomics">
        <title>Complete genome sequence of Shigella flexneri 5b and comparison with Shigella flexneri 2a.</title>
        <authorList>
            <person name="Nie H."/>
            <person name="Yang F."/>
            <person name="Zhang X."/>
            <person name="Yang J."/>
            <person name="Chen L."/>
            <person name="Wang J."/>
            <person name="Xiong Z."/>
            <person name="Peng J."/>
            <person name="Sun L."/>
            <person name="Dong J."/>
            <person name="Xue Y."/>
            <person name="Xu X."/>
            <person name="Chen S."/>
            <person name="Yao Z."/>
            <person name="Shen Y."/>
            <person name="Jin Q."/>
        </authorList>
    </citation>
    <scope>NUCLEOTIDE SEQUENCE [LARGE SCALE GENOMIC DNA]</scope>
    <source>
        <strain>8401</strain>
    </source>
</reference>
<protein>
    <recommendedName>
        <fullName evidence="1">UDP-N-acetyl-D-mannosaminuronic acid transferase</fullName>
        <shortName evidence="1">UDP-ManNAcA transferase</shortName>
        <ecNumber evidence="1">2.4.1.180</ecNumber>
    </recommendedName>
</protein>
<gene>
    <name evidence="1" type="primary">wecG</name>
    <name evidence="1" type="synonym">rffM</name>
    <name type="ordered locus">SFV_3709</name>
</gene>
<name>WECG_SHIF8</name>
<organism>
    <name type="scientific">Shigella flexneri serotype 5b (strain 8401)</name>
    <dbReference type="NCBI Taxonomy" id="373384"/>
    <lineage>
        <taxon>Bacteria</taxon>
        <taxon>Pseudomonadati</taxon>
        <taxon>Pseudomonadota</taxon>
        <taxon>Gammaproteobacteria</taxon>
        <taxon>Enterobacterales</taxon>
        <taxon>Enterobacteriaceae</taxon>
        <taxon>Shigella</taxon>
    </lineage>
</organism>
<dbReference type="EC" id="2.4.1.180" evidence="1"/>
<dbReference type="EMBL" id="CP000266">
    <property type="protein sequence ID" value="ABF05730.1"/>
    <property type="molecule type" value="Genomic_DNA"/>
</dbReference>
<dbReference type="RefSeq" id="WP_001064038.1">
    <property type="nucleotide sequence ID" value="NC_008258.1"/>
</dbReference>
<dbReference type="SMR" id="Q0SYY5"/>
<dbReference type="CAZy" id="GT26">
    <property type="family name" value="Glycosyltransferase Family 26"/>
</dbReference>
<dbReference type="GeneID" id="93778149"/>
<dbReference type="KEGG" id="sfv:SFV_3709"/>
<dbReference type="HOGENOM" id="CLU_063203_3_2_6"/>
<dbReference type="UniPathway" id="UPA00566"/>
<dbReference type="Proteomes" id="UP000000659">
    <property type="component" value="Chromosome"/>
</dbReference>
<dbReference type="GO" id="GO:0047241">
    <property type="term" value="F:lipopolysaccharide N-acetylmannosaminouronosyltransferase activity"/>
    <property type="evidence" value="ECO:0007669"/>
    <property type="project" value="UniProtKB-UniRule"/>
</dbReference>
<dbReference type="GO" id="GO:0009246">
    <property type="term" value="P:enterobacterial common antigen biosynthetic process"/>
    <property type="evidence" value="ECO:0007669"/>
    <property type="project" value="UniProtKB-UniRule"/>
</dbReference>
<dbReference type="CDD" id="cd06533">
    <property type="entry name" value="Glyco_transf_WecG_TagA"/>
    <property type="match status" value="1"/>
</dbReference>
<dbReference type="HAMAP" id="MF_01001">
    <property type="entry name" value="WecG_RffM"/>
    <property type="match status" value="1"/>
</dbReference>
<dbReference type="InterPro" id="IPR023085">
    <property type="entry name" value="UDP-ManNAcA_Trfase_WecG"/>
</dbReference>
<dbReference type="InterPro" id="IPR004629">
    <property type="entry name" value="WecG_TagA_CpsF"/>
</dbReference>
<dbReference type="NCBIfam" id="NF002980">
    <property type="entry name" value="PRK03692.1"/>
    <property type="match status" value="1"/>
</dbReference>
<dbReference type="NCBIfam" id="TIGR00696">
    <property type="entry name" value="wecG_tagA_cpsF"/>
    <property type="match status" value="1"/>
</dbReference>
<dbReference type="PANTHER" id="PTHR34136">
    <property type="match status" value="1"/>
</dbReference>
<dbReference type="PANTHER" id="PTHR34136:SF1">
    <property type="entry name" value="UDP-N-ACETYL-D-MANNOSAMINURONIC ACID TRANSFERASE"/>
    <property type="match status" value="1"/>
</dbReference>
<dbReference type="Pfam" id="PF03808">
    <property type="entry name" value="Glyco_tran_WecG"/>
    <property type="match status" value="1"/>
</dbReference>
<evidence type="ECO:0000255" key="1">
    <source>
        <dbReference type="HAMAP-Rule" id="MF_01001"/>
    </source>
</evidence>